<reference key="1">
    <citation type="submission" date="2008-02" db="EMBL/GenBank/DDBJ databases">
        <title>Complete sequence of Haemophilus somnus 2336.</title>
        <authorList>
            <consortium name="US DOE Joint Genome Institute"/>
            <person name="Siddaramappa S."/>
            <person name="Duncan A.J."/>
            <person name="Challacombe J.F."/>
            <person name="Rainey D."/>
            <person name="Gillaspy A.F."/>
            <person name="Carson M."/>
            <person name="Gipson J."/>
            <person name="Gipson M."/>
            <person name="Bruce D."/>
            <person name="Detter J.C."/>
            <person name="Han C.S."/>
            <person name="Land M."/>
            <person name="Tapia R."/>
            <person name="Thompson L.S."/>
            <person name="Orvis J."/>
            <person name="Zaitshik J."/>
            <person name="Barnes G."/>
            <person name="Brettin T.S."/>
            <person name="Dyer D.W."/>
            <person name="Inzana T.J."/>
        </authorList>
    </citation>
    <scope>NUCLEOTIDE SEQUENCE [LARGE SCALE GENOMIC DNA]</scope>
    <source>
        <strain>2336</strain>
    </source>
</reference>
<gene>
    <name evidence="1" type="primary">surE</name>
    <name type="ordered locus">HSM_0501</name>
</gene>
<organism>
    <name type="scientific">Histophilus somni (strain 2336)</name>
    <name type="common">Haemophilus somnus</name>
    <dbReference type="NCBI Taxonomy" id="228400"/>
    <lineage>
        <taxon>Bacteria</taxon>
        <taxon>Pseudomonadati</taxon>
        <taxon>Pseudomonadota</taxon>
        <taxon>Gammaproteobacteria</taxon>
        <taxon>Pasteurellales</taxon>
        <taxon>Pasteurellaceae</taxon>
        <taxon>Histophilus</taxon>
    </lineage>
</organism>
<proteinExistence type="inferred from homology"/>
<protein>
    <recommendedName>
        <fullName evidence="1">5'-nucleotidase SurE</fullName>
        <ecNumber evidence="1">3.1.3.5</ecNumber>
    </recommendedName>
    <alternativeName>
        <fullName evidence="1">Nucleoside 5'-monophosphate phosphohydrolase</fullName>
    </alternativeName>
</protein>
<comment type="function">
    <text evidence="1">Nucleotidase that shows phosphatase activity on nucleoside 5'-monophosphates.</text>
</comment>
<comment type="catalytic activity">
    <reaction evidence="1">
        <text>a ribonucleoside 5'-phosphate + H2O = a ribonucleoside + phosphate</text>
        <dbReference type="Rhea" id="RHEA:12484"/>
        <dbReference type="ChEBI" id="CHEBI:15377"/>
        <dbReference type="ChEBI" id="CHEBI:18254"/>
        <dbReference type="ChEBI" id="CHEBI:43474"/>
        <dbReference type="ChEBI" id="CHEBI:58043"/>
        <dbReference type="EC" id="3.1.3.5"/>
    </reaction>
</comment>
<comment type="cofactor">
    <cofactor evidence="1">
        <name>a divalent metal cation</name>
        <dbReference type="ChEBI" id="CHEBI:60240"/>
    </cofactor>
    <text evidence="1">Binds 1 divalent metal cation per subunit.</text>
</comment>
<comment type="subcellular location">
    <subcellularLocation>
        <location evidence="1">Cytoplasm</location>
    </subcellularLocation>
</comment>
<comment type="similarity">
    <text evidence="1">Belongs to the SurE nucleotidase family.</text>
</comment>
<evidence type="ECO:0000255" key="1">
    <source>
        <dbReference type="HAMAP-Rule" id="MF_00060"/>
    </source>
</evidence>
<dbReference type="EC" id="3.1.3.5" evidence="1"/>
<dbReference type="EMBL" id="CP000947">
    <property type="protein sequence ID" value="ACA32149.1"/>
    <property type="molecule type" value="Genomic_DNA"/>
</dbReference>
<dbReference type="RefSeq" id="WP_011609651.1">
    <property type="nucleotide sequence ID" value="NC_010519.1"/>
</dbReference>
<dbReference type="SMR" id="B0URR1"/>
<dbReference type="STRING" id="228400.HSM_0501"/>
<dbReference type="GeneID" id="31486780"/>
<dbReference type="KEGG" id="hsm:HSM_0501"/>
<dbReference type="HOGENOM" id="CLU_045192_1_2_6"/>
<dbReference type="GO" id="GO:0005737">
    <property type="term" value="C:cytoplasm"/>
    <property type="evidence" value="ECO:0007669"/>
    <property type="project" value="UniProtKB-SubCell"/>
</dbReference>
<dbReference type="GO" id="GO:0008254">
    <property type="term" value="F:3'-nucleotidase activity"/>
    <property type="evidence" value="ECO:0007669"/>
    <property type="project" value="TreeGrafter"/>
</dbReference>
<dbReference type="GO" id="GO:0008253">
    <property type="term" value="F:5'-nucleotidase activity"/>
    <property type="evidence" value="ECO:0007669"/>
    <property type="project" value="UniProtKB-UniRule"/>
</dbReference>
<dbReference type="GO" id="GO:0004309">
    <property type="term" value="F:exopolyphosphatase activity"/>
    <property type="evidence" value="ECO:0007669"/>
    <property type="project" value="TreeGrafter"/>
</dbReference>
<dbReference type="GO" id="GO:0046872">
    <property type="term" value="F:metal ion binding"/>
    <property type="evidence" value="ECO:0007669"/>
    <property type="project" value="UniProtKB-UniRule"/>
</dbReference>
<dbReference type="GO" id="GO:0000166">
    <property type="term" value="F:nucleotide binding"/>
    <property type="evidence" value="ECO:0007669"/>
    <property type="project" value="UniProtKB-KW"/>
</dbReference>
<dbReference type="FunFam" id="3.40.1210.10:FF:000001">
    <property type="entry name" value="5'/3'-nucleotidase SurE"/>
    <property type="match status" value="1"/>
</dbReference>
<dbReference type="Gene3D" id="3.40.1210.10">
    <property type="entry name" value="Survival protein SurE-like phosphatase/nucleotidase"/>
    <property type="match status" value="1"/>
</dbReference>
<dbReference type="HAMAP" id="MF_00060">
    <property type="entry name" value="SurE"/>
    <property type="match status" value="1"/>
</dbReference>
<dbReference type="InterPro" id="IPR030048">
    <property type="entry name" value="SurE"/>
</dbReference>
<dbReference type="InterPro" id="IPR002828">
    <property type="entry name" value="SurE-like_Pase/nucleotidase"/>
</dbReference>
<dbReference type="InterPro" id="IPR036523">
    <property type="entry name" value="SurE-like_sf"/>
</dbReference>
<dbReference type="NCBIfam" id="NF001489">
    <property type="entry name" value="PRK00346.1-3"/>
    <property type="match status" value="1"/>
</dbReference>
<dbReference type="NCBIfam" id="NF001490">
    <property type="entry name" value="PRK00346.1-4"/>
    <property type="match status" value="1"/>
</dbReference>
<dbReference type="NCBIfam" id="TIGR00087">
    <property type="entry name" value="surE"/>
    <property type="match status" value="1"/>
</dbReference>
<dbReference type="PANTHER" id="PTHR30457">
    <property type="entry name" value="5'-NUCLEOTIDASE SURE"/>
    <property type="match status" value="1"/>
</dbReference>
<dbReference type="PANTHER" id="PTHR30457:SF12">
    <property type="entry name" value="5'_3'-NUCLEOTIDASE SURE"/>
    <property type="match status" value="1"/>
</dbReference>
<dbReference type="Pfam" id="PF01975">
    <property type="entry name" value="SurE"/>
    <property type="match status" value="1"/>
</dbReference>
<dbReference type="SUPFAM" id="SSF64167">
    <property type="entry name" value="SurE-like"/>
    <property type="match status" value="1"/>
</dbReference>
<feature type="chain" id="PRO_1000075030" description="5'-nucleotidase SurE">
    <location>
        <begin position="1"/>
        <end position="246"/>
    </location>
</feature>
<feature type="binding site" evidence="1">
    <location>
        <position position="8"/>
    </location>
    <ligand>
        <name>a divalent metal cation</name>
        <dbReference type="ChEBI" id="CHEBI:60240"/>
    </ligand>
</feature>
<feature type="binding site" evidence="1">
    <location>
        <position position="9"/>
    </location>
    <ligand>
        <name>a divalent metal cation</name>
        <dbReference type="ChEBI" id="CHEBI:60240"/>
    </ligand>
</feature>
<feature type="binding site" evidence="1">
    <location>
        <position position="39"/>
    </location>
    <ligand>
        <name>a divalent metal cation</name>
        <dbReference type="ChEBI" id="CHEBI:60240"/>
    </ligand>
</feature>
<feature type="binding site" evidence="1">
    <location>
        <position position="91"/>
    </location>
    <ligand>
        <name>a divalent metal cation</name>
        <dbReference type="ChEBI" id="CHEBI:60240"/>
    </ligand>
</feature>
<sequence>MHILLSNDDGIQAEGIKTLAKELRKFAQVTVVAPDRNRSAASSSLTLVEPLRPMKLDNGDYSINGTPADCVHLALNGFLSGQIDLVVSGINAGVNLGDDVIYSGTVAAALEGRHLSLPAIAVSLDGRQHYESAAIIVSQLIPKLYGRLLKSREIININVPDLPYSEIKGIKVCHLGYRAAAADIIKQKDPRGEEIYWIGPIGLAENESEGTDFHAVKNGYVSITPIQTDMTAYHSMTALQQWLDKE</sequence>
<accession>B0URR1</accession>
<name>SURE_HISS2</name>
<keyword id="KW-0963">Cytoplasm</keyword>
<keyword id="KW-0378">Hydrolase</keyword>
<keyword id="KW-0479">Metal-binding</keyword>
<keyword id="KW-0547">Nucleotide-binding</keyword>